<reference key="1">
    <citation type="journal article" date="1997" name="Nature">
        <title>The complete genome sequence of the hyperthermophilic, sulphate-reducing archaeon Archaeoglobus fulgidus.</title>
        <authorList>
            <person name="Klenk H.-P."/>
            <person name="Clayton R.A."/>
            <person name="Tomb J.-F."/>
            <person name="White O."/>
            <person name="Nelson K.E."/>
            <person name="Ketchum K.A."/>
            <person name="Dodson R.J."/>
            <person name="Gwinn M.L."/>
            <person name="Hickey E.K."/>
            <person name="Peterson J.D."/>
            <person name="Richardson D.L."/>
            <person name="Kerlavage A.R."/>
            <person name="Graham D.E."/>
            <person name="Kyrpides N.C."/>
            <person name="Fleischmann R.D."/>
            <person name="Quackenbush J."/>
            <person name="Lee N.H."/>
            <person name="Sutton G.G."/>
            <person name="Gill S.R."/>
            <person name="Kirkness E.F."/>
            <person name="Dougherty B.A."/>
            <person name="McKenney K."/>
            <person name="Adams M.D."/>
            <person name="Loftus B.J."/>
            <person name="Peterson S.N."/>
            <person name="Reich C.I."/>
            <person name="McNeil L.K."/>
            <person name="Badger J.H."/>
            <person name="Glodek A."/>
            <person name="Zhou L."/>
            <person name="Overbeek R."/>
            <person name="Gocayne J.D."/>
            <person name="Weidman J.F."/>
            <person name="McDonald L.A."/>
            <person name="Utterback T.R."/>
            <person name="Cotton M.D."/>
            <person name="Spriggs T."/>
            <person name="Artiach P."/>
            <person name="Kaine B.P."/>
            <person name="Sykes S.M."/>
            <person name="Sadow P.W."/>
            <person name="D'Andrea K.P."/>
            <person name="Bowman C."/>
            <person name="Fujii C."/>
            <person name="Garland S.A."/>
            <person name="Mason T.M."/>
            <person name="Olsen G.J."/>
            <person name="Fraser C.M."/>
            <person name="Smith H.O."/>
            <person name="Woese C.R."/>
            <person name="Venter J.C."/>
        </authorList>
    </citation>
    <scope>NUCLEOTIDE SEQUENCE [LARGE SCALE GENOMIC DNA]</scope>
    <source>
        <strain>ATCC 49558 / DSM 4304 / JCM 9628 / NBRC 100126 / VC-16</strain>
    </source>
</reference>
<organism>
    <name type="scientific">Archaeoglobus fulgidus (strain ATCC 49558 / DSM 4304 / JCM 9628 / NBRC 100126 / VC-16)</name>
    <dbReference type="NCBI Taxonomy" id="224325"/>
    <lineage>
        <taxon>Archaea</taxon>
        <taxon>Methanobacteriati</taxon>
        <taxon>Methanobacteriota</taxon>
        <taxon>Archaeoglobi</taxon>
        <taxon>Archaeoglobales</taxon>
        <taxon>Archaeoglobaceae</taxon>
        <taxon>Archaeoglobus</taxon>
    </lineage>
</organism>
<evidence type="ECO:0000255" key="1">
    <source>
        <dbReference type="HAMAP-Rule" id="MF_00585"/>
    </source>
</evidence>
<feature type="chain" id="PRO_0000144223" description="UPF0216 protein AF_0460">
    <location>
        <begin position="1"/>
        <end position="134"/>
    </location>
</feature>
<proteinExistence type="inferred from homology"/>
<dbReference type="EMBL" id="AE000782">
    <property type="protein sequence ID" value="AAB90777.1"/>
    <property type="molecule type" value="Genomic_DNA"/>
</dbReference>
<dbReference type="PIR" id="D69307">
    <property type="entry name" value="D69307"/>
</dbReference>
<dbReference type="RefSeq" id="WP_010877967.1">
    <property type="nucleotide sequence ID" value="NC_000917.1"/>
</dbReference>
<dbReference type="SMR" id="O29789"/>
<dbReference type="STRING" id="224325.AF_0460"/>
<dbReference type="PaxDb" id="224325-AF_0460"/>
<dbReference type="DNASU" id="1483677"/>
<dbReference type="EnsemblBacteria" id="AAB90777">
    <property type="protein sequence ID" value="AAB90777"/>
    <property type="gene ID" value="AF_0460"/>
</dbReference>
<dbReference type="KEGG" id="afu:AF_0460"/>
<dbReference type="eggNOG" id="arCOG01921">
    <property type="taxonomic scope" value="Archaea"/>
</dbReference>
<dbReference type="HOGENOM" id="CLU_146474_0_0_2"/>
<dbReference type="OrthoDB" id="18795at2157"/>
<dbReference type="PhylomeDB" id="O29789"/>
<dbReference type="Proteomes" id="UP000002199">
    <property type="component" value="Chromosome"/>
</dbReference>
<dbReference type="HAMAP" id="MF_00585">
    <property type="entry name" value="UPF0216"/>
    <property type="match status" value="1"/>
</dbReference>
<dbReference type="InterPro" id="IPR002746">
    <property type="entry name" value="UPF0216"/>
</dbReference>
<dbReference type="NCBIfam" id="NF003153">
    <property type="entry name" value="PRK04115.1"/>
    <property type="match status" value="1"/>
</dbReference>
<dbReference type="Pfam" id="PF01886">
    <property type="entry name" value="DUF61"/>
    <property type="match status" value="1"/>
</dbReference>
<dbReference type="PIRSF" id="PIRSF005264">
    <property type="entry name" value="UCP005264"/>
    <property type="match status" value="1"/>
</dbReference>
<protein>
    <recommendedName>
        <fullName evidence="1">UPF0216 protein AF_0460</fullName>
    </recommendedName>
</protein>
<gene>
    <name type="ordered locus">AF_0460</name>
</gene>
<name>Y460_ARCFU</name>
<accession>O29789</accession>
<sequence>MDEKTLAKMIEAVNKHMPEKTRSLAEMLKEKDPTIRAKDGNEYYIEKRELEFIAQHVDELDWPRFRIPVILEMNDIGGERVIYVRDKLHAEFIKRAFGFDRVLNGILTLYMYELPQIRRKLRTASQVIFRISLK</sequence>
<keyword id="KW-1185">Reference proteome</keyword>
<comment type="similarity">
    <text evidence="1">Belongs to the UPF0216 family.</text>
</comment>